<feature type="chain" id="PRO_1000022410" description="Pyridoxine 5'-phosphate synthase">
    <location>
        <begin position="1"/>
        <end position="249"/>
    </location>
</feature>
<feature type="active site" description="Proton acceptor" evidence="1">
    <location>
        <position position="43"/>
    </location>
</feature>
<feature type="active site" description="Proton acceptor" evidence="1">
    <location>
        <position position="70"/>
    </location>
</feature>
<feature type="active site" description="Proton donor" evidence="1">
    <location>
        <position position="190"/>
    </location>
</feature>
<feature type="binding site" evidence="1">
    <location>
        <position position="7"/>
    </location>
    <ligand>
        <name>3-amino-2-oxopropyl phosphate</name>
        <dbReference type="ChEBI" id="CHEBI:57279"/>
    </ligand>
</feature>
<feature type="binding site" evidence="1">
    <location>
        <begin position="9"/>
        <end position="10"/>
    </location>
    <ligand>
        <name>1-deoxy-D-xylulose 5-phosphate</name>
        <dbReference type="ChEBI" id="CHEBI:57792"/>
    </ligand>
</feature>
<feature type="binding site" evidence="1">
    <location>
        <position position="18"/>
    </location>
    <ligand>
        <name>3-amino-2-oxopropyl phosphate</name>
        <dbReference type="ChEBI" id="CHEBI:57279"/>
    </ligand>
</feature>
<feature type="binding site" evidence="1">
    <location>
        <position position="45"/>
    </location>
    <ligand>
        <name>1-deoxy-D-xylulose 5-phosphate</name>
        <dbReference type="ChEBI" id="CHEBI:57792"/>
    </ligand>
</feature>
<feature type="binding site" evidence="1">
    <location>
        <position position="50"/>
    </location>
    <ligand>
        <name>1-deoxy-D-xylulose 5-phosphate</name>
        <dbReference type="ChEBI" id="CHEBI:57792"/>
    </ligand>
</feature>
<feature type="binding site" evidence="1">
    <location>
        <position position="100"/>
    </location>
    <ligand>
        <name>1-deoxy-D-xylulose 5-phosphate</name>
        <dbReference type="ChEBI" id="CHEBI:57792"/>
    </ligand>
</feature>
<feature type="binding site" evidence="1">
    <location>
        <position position="191"/>
    </location>
    <ligand>
        <name>3-amino-2-oxopropyl phosphate</name>
        <dbReference type="ChEBI" id="CHEBI:57279"/>
    </ligand>
</feature>
<feature type="binding site" evidence="1">
    <location>
        <begin position="212"/>
        <end position="213"/>
    </location>
    <ligand>
        <name>3-amino-2-oxopropyl phosphate</name>
        <dbReference type="ChEBI" id="CHEBI:57279"/>
    </ligand>
</feature>
<feature type="site" description="Transition state stabilizer" evidence="1">
    <location>
        <position position="151"/>
    </location>
</feature>
<protein>
    <recommendedName>
        <fullName evidence="1">Pyridoxine 5'-phosphate synthase</fullName>
        <shortName evidence="1">PNP synthase</shortName>
        <ecNumber evidence="1">2.6.99.2</ecNumber>
    </recommendedName>
</protein>
<evidence type="ECO:0000255" key="1">
    <source>
        <dbReference type="HAMAP-Rule" id="MF_00279"/>
    </source>
</evidence>
<organism>
    <name type="scientific">Synechococcus sp. (strain CC9311)</name>
    <dbReference type="NCBI Taxonomy" id="64471"/>
    <lineage>
        <taxon>Bacteria</taxon>
        <taxon>Bacillati</taxon>
        <taxon>Cyanobacteriota</taxon>
        <taxon>Cyanophyceae</taxon>
        <taxon>Synechococcales</taxon>
        <taxon>Synechococcaceae</taxon>
        <taxon>Synechococcus</taxon>
    </lineage>
</organism>
<accession>Q0IB11</accession>
<keyword id="KW-0963">Cytoplasm</keyword>
<keyword id="KW-0664">Pyridoxine biosynthesis</keyword>
<keyword id="KW-1185">Reference proteome</keyword>
<keyword id="KW-0808">Transferase</keyword>
<name>PDXJ_SYNS3</name>
<gene>
    <name evidence="1" type="primary">pdxJ</name>
    <name type="ordered locus">sync_1151</name>
</gene>
<proteinExistence type="inferred from homology"/>
<sequence>MASLGVNIDHIANVRQARRTVEPDPVPMALMAELGGADGITIHLREDRRHIQDRDLTLLGQTVRTRLNLEMAATTEMVEIALREQPDMVTLVPERREEVTTEGGLDVRSQCKSLSSVIDTLQSNDIPVSLFVDPDRNQLEACQQSGARWVELHTGRYAEASWREQPITLARLIEATEQARSMGLRVNAGHGLTYQNVEPIAAIAGMEELNIGHTIVARALCVGLQEAVREMKCLVQNPRRDPLFGSTSS</sequence>
<comment type="function">
    <text evidence="1">Catalyzes the complicated ring closure reaction between the two acyclic compounds 1-deoxy-D-xylulose-5-phosphate (DXP) and 3-amino-2-oxopropyl phosphate (1-amino-acetone-3-phosphate or AAP) to form pyridoxine 5'-phosphate (PNP) and inorganic phosphate.</text>
</comment>
<comment type="catalytic activity">
    <reaction evidence="1">
        <text>3-amino-2-oxopropyl phosphate + 1-deoxy-D-xylulose 5-phosphate = pyridoxine 5'-phosphate + phosphate + 2 H2O + H(+)</text>
        <dbReference type="Rhea" id="RHEA:15265"/>
        <dbReference type="ChEBI" id="CHEBI:15377"/>
        <dbReference type="ChEBI" id="CHEBI:15378"/>
        <dbReference type="ChEBI" id="CHEBI:43474"/>
        <dbReference type="ChEBI" id="CHEBI:57279"/>
        <dbReference type="ChEBI" id="CHEBI:57792"/>
        <dbReference type="ChEBI" id="CHEBI:58589"/>
        <dbReference type="EC" id="2.6.99.2"/>
    </reaction>
</comment>
<comment type="pathway">
    <text evidence="1">Cofactor biosynthesis; pyridoxine 5'-phosphate biosynthesis; pyridoxine 5'-phosphate from D-erythrose 4-phosphate: step 5/5.</text>
</comment>
<comment type="subunit">
    <text evidence="1">Homooctamer; tetramer of dimers.</text>
</comment>
<comment type="subcellular location">
    <subcellularLocation>
        <location evidence="1">Cytoplasm</location>
    </subcellularLocation>
</comment>
<comment type="similarity">
    <text evidence="1">Belongs to the PNP synthase family.</text>
</comment>
<reference key="1">
    <citation type="journal article" date="2006" name="Proc. Natl. Acad. Sci. U.S.A.">
        <title>Genome sequence of Synechococcus CC9311: insights into adaptation to a coastal environment.</title>
        <authorList>
            <person name="Palenik B."/>
            <person name="Ren Q."/>
            <person name="Dupont C.L."/>
            <person name="Myers G.S."/>
            <person name="Heidelberg J.F."/>
            <person name="Badger J.H."/>
            <person name="Madupu R."/>
            <person name="Nelson W.C."/>
            <person name="Brinkac L.M."/>
            <person name="Dodson R.J."/>
            <person name="Durkin A.S."/>
            <person name="Daugherty S.C."/>
            <person name="Sullivan S.A."/>
            <person name="Khouri H."/>
            <person name="Mohamoud Y."/>
            <person name="Halpin R."/>
            <person name="Paulsen I.T."/>
        </authorList>
    </citation>
    <scope>NUCLEOTIDE SEQUENCE [LARGE SCALE GENOMIC DNA]</scope>
    <source>
        <strain>CC9311</strain>
    </source>
</reference>
<dbReference type="EC" id="2.6.99.2" evidence="1"/>
<dbReference type="EMBL" id="CP000435">
    <property type="protein sequence ID" value="ABI45851.1"/>
    <property type="molecule type" value="Genomic_DNA"/>
</dbReference>
<dbReference type="RefSeq" id="WP_011619082.1">
    <property type="nucleotide sequence ID" value="NC_008319.1"/>
</dbReference>
<dbReference type="SMR" id="Q0IB11"/>
<dbReference type="STRING" id="64471.sync_1151"/>
<dbReference type="KEGG" id="syg:sync_1151"/>
<dbReference type="eggNOG" id="COG0854">
    <property type="taxonomic scope" value="Bacteria"/>
</dbReference>
<dbReference type="HOGENOM" id="CLU_074563_0_0_3"/>
<dbReference type="OrthoDB" id="9806590at2"/>
<dbReference type="UniPathway" id="UPA00244">
    <property type="reaction ID" value="UER00313"/>
</dbReference>
<dbReference type="Proteomes" id="UP000001961">
    <property type="component" value="Chromosome"/>
</dbReference>
<dbReference type="GO" id="GO:0005829">
    <property type="term" value="C:cytosol"/>
    <property type="evidence" value="ECO:0007669"/>
    <property type="project" value="TreeGrafter"/>
</dbReference>
<dbReference type="GO" id="GO:0033856">
    <property type="term" value="F:pyridoxine 5'-phosphate synthase activity"/>
    <property type="evidence" value="ECO:0007669"/>
    <property type="project" value="UniProtKB-EC"/>
</dbReference>
<dbReference type="GO" id="GO:0008615">
    <property type="term" value="P:pyridoxine biosynthetic process"/>
    <property type="evidence" value="ECO:0007669"/>
    <property type="project" value="UniProtKB-UniRule"/>
</dbReference>
<dbReference type="CDD" id="cd00003">
    <property type="entry name" value="PNPsynthase"/>
    <property type="match status" value="1"/>
</dbReference>
<dbReference type="Gene3D" id="3.20.20.70">
    <property type="entry name" value="Aldolase class I"/>
    <property type="match status" value="1"/>
</dbReference>
<dbReference type="HAMAP" id="MF_00279">
    <property type="entry name" value="PdxJ"/>
    <property type="match status" value="1"/>
</dbReference>
<dbReference type="InterPro" id="IPR013785">
    <property type="entry name" value="Aldolase_TIM"/>
</dbReference>
<dbReference type="InterPro" id="IPR004569">
    <property type="entry name" value="PyrdxlP_synth_PdxJ"/>
</dbReference>
<dbReference type="InterPro" id="IPR036130">
    <property type="entry name" value="Pyridoxine-5'_phos_synth"/>
</dbReference>
<dbReference type="NCBIfam" id="TIGR00559">
    <property type="entry name" value="pdxJ"/>
    <property type="match status" value="1"/>
</dbReference>
<dbReference type="NCBIfam" id="NF003625">
    <property type="entry name" value="PRK05265.1-3"/>
    <property type="match status" value="1"/>
</dbReference>
<dbReference type="NCBIfam" id="NF003627">
    <property type="entry name" value="PRK05265.1-5"/>
    <property type="match status" value="1"/>
</dbReference>
<dbReference type="PANTHER" id="PTHR30456">
    <property type="entry name" value="PYRIDOXINE 5'-PHOSPHATE SYNTHASE"/>
    <property type="match status" value="1"/>
</dbReference>
<dbReference type="PANTHER" id="PTHR30456:SF0">
    <property type="entry name" value="PYRIDOXINE 5'-PHOSPHATE SYNTHASE"/>
    <property type="match status" value="1"/>
</dbReference>
<dbReference type="Pfam" id="PF03740">
    <property type="entry name" value="PdxJ"/>
    <property type="match status" value="1"/>
</dbReference>
<dbReference type="SUPFAM" id="SSF63892">
    <property type="entry name" value="Pyridoxine 5'-phosphate synthase"/>
    <property type="match status" value="1"/>
</dbReference>